<keyword id="KW-0028">Amino-acid biosynthesis</keyword>
<keyword id="KW-0032">Aminotransferase</keyword>
<keyword id="KW-0368">Histidine biosynthesis</keyword>
<keyword id="KW-0663">Pyridoxal phosphate</keyword>
<keyword id="KW-0808">Transferase</keyword>
<protein>
    <recommendedName>
        <fullName evidence="1">Histidinol-phosphate aminotransferase</fullName>
        <ecNumber evidence="1">2.6.1.9</ecNumber>
    </recommendedName>
    <alternativeName>
        <fullName evidence="1">Imidazole acetol-phosphate transaminase</fullName>
    </alternativeName>
</protein>
<reference key="1">
    <citation type="journal article" date="2005" name="J. Bacteriol.">
        <title>Insights into genome plasticity and pathogenicity of the plant pathogenic Bacterium Xanthomonas campestris pv. vesicatoria revealed by the complete genome sequence.</title>
        <authorList>
            <person name="Thieme F."/>
            <person name="Koebnik R."/>
            <person name="Bekel T."/>
            <person name="Berger C."/>
            <person name="Boch J."/>
            <person name="Buettner D."/>
            <person name="Caldana C."/>
            <person name="Gaigalat L."/>
            <person name="Goesmann A."/>
            <person name="Kay S."/>
            <person name="Kirchner O."/>
            <person name="Lanz C."/>
            <person name="Linke B."/>
            <person name="McHardy A.C."/>
            <person name="Meyer F."/>
            <person name="Mittenhuber G."/>
            <person name="Nies D.H."/>
            <person name="Niesbach-Kloesgen U."/>
            <person name="Patschkowski T."/>
            <person name="Rueckert C."/>
            <person name="Rupp O."/>
            <person name="Schneiker S."/>
            <person name="Schuster S.C."/>
            <person name="Vorhoelter F.J."/>
            <person name="Weber E."/>
            <person name="Puehler A."/>
            <person name="Bonas U."/>
            <person name="Bartels D."/>
            <person name="Kaiser O."/>
        </authorList>
    </citation>
    <scope>NUCLEOTIDE SEQUENCE [LARGE SCALE GENOMIC DNA]</scope>
    <source>
        <strain>85-10</strain>
    </source>
</reference>
<dbReference type="EC" id="2.6.1.9" evidence="1"/>
<dbReference type="EMBL" id="AM039952">
    <property type="protein sequence ID" value="CAJ23553.1"/>
    <property type="molecule type" value="Genomic_DNA"/>
</dbReference>
<dbReference type="RefSeq" id="WP_011347186.1">
    <property type="nucleotide sequence ID" value="NZ_CP017190.1"/>
</dbReference>
<dbReference type="SMR" id="Q3BUF6"/>
<dbReference type="STRING" id="456327.BJD11_13045"/>
<dbReference type="KEGG" id="xcv:XCV1876"/>
<dbReference type="eggNOG" id="COG0079">
    <property type="taxonomic scope" value="Bacteria"/>
</dbReference>
<dbReference type="HOGENOM" id="CLU_017584_3_1_6"/>
<dbReference type="UniPathway" id="UPA00031">
    <property type="reaction ID" value="UER00012"/>
</dbReference>
<dbReference type="Proteomes" id="UP000007069">
    <property type="component" value="Chromosome"/>
</dbReference>
<dbReference type="GO" id="GO:0004400">
    <property type="term" value="F:histidinol-phosphate transaminase activity"/>
    <property type="evidence" value="ECO:0007669"/>
    <property type="project" value="UniProtKB-UniRule"/>
</dbReference>
<dbReference type="GO" id="GO:0030170">
    <property type="term" value="F:pyridoxal phosphate binding"/>
    <property type="evidence" value="ECO:0007669"/>
    <property type="project" value="InterPro"/>
</dbReference>
<dbReference type="GO" id="GO:0000105">
    <property type="term" value="P:L-histidine biosynthetic process"/>
    <property type="evidence" value="ECO:0007669"/>
    <property type="project" value="UniProtKB-UniRule"/>
</dbReference>
<dbReference type="CDD" id="cd00609">
    <property type="entry name" value="AAT_like"/>
    <property type="match status" value="1"/>
</dbReference>
<dbReference type="Gene3D" id="3.90.1150.10">
    <property type="entry name" value="Aspartate Aminotransferase, domain 1"/>
    <property type="match status" value="1"/>
</dbReference>
<dbReference type="Gene3D" id="3.40.640.10">
    <property type="entry name" value="Type I PLP-dependent aspartate aminotransferase-like (Major domain)"/>
    <property type="match status" value="1"/>
</dbReference>
<dbReference type="HAMAP" id="MF_01023">
    <property type="entry name" value="HisC_aminotrans_2"/>
    <property type="match status" value="1"/>
</dbReference>
<dbReference type="InterPro" id="IPR004839">
    <property type="entry name" value="Aminotransferase_I/II_large"/>
</dbReference>
<dbReference type="InterPro" id="IPR005861">
    <property type="entry name" value="HisP_aminotrans"/>
</dbReference>
<dbReference type="InterPro" id="IPR015424">
    <property type="entry name" value="PyrdxlP-dep_Trfase"/>
</dbReference>
<dbReference type="InterPro" id="IPR015421">
    <property type="entry name" value="PyrdxlP-dep_Trfase_major"/>
</dbReference>
<dbReference type="InterPro" id="IPR015422">
    <property type="entry name" value="PyrdxlP-dep_Trfase_small"/>
</dbReference>
<dbReference type="NCBIfam" id="TIGR01141">
    <property type="entry name" value="hisC"/>
    <property type="match status" value="1"/>
</dbReference>
<dbReference type="PANTHER" id="PTHR42885:SF2">
    <property type="entry name" value="HISTIDINOL-PHOSPHATE AMINOTRANSFERASE"/>
    <property type="match status" value="1"/>
</dbReference>
<dbReference type="PANTHER" id="PTHR42885">
    <property type="entry name" value="HISTIDINOL-PHOSPHATE AMINOTRANSFERASE-RELATED"/>
    <property type="match status" value="1"/>
</dbReference>
<dbReference type="Pfam" id="PF00155">
    <property type="entry name" value="Aminotran_1_2"/>
    <property type="match status" value="1"/>
</dbReference>
<dbReference type="SUPFAM" id="SSF53383">
    <property type="entry name" value="PLP-dependent transferases"/>
    <property type="match status" value="1"/>
</dbReference>
<comment type="catalytic activity">
    <reaction evidence="1">
        <text>L-histidinol phosphate + 2-oxoglutarate = 3-(imidazol-4-yl)-2-oxopropyl phosphate + L-glutamate</text>
        <dbReference type="Rhea" id="RHEA:23744"/>
        <dbReference type="ChEBI" id="CHEBI:16810"/>
        <dbReference type="ChEBI" id="CHEBI:29985"/>
        <dbReference type="ChEBI" id="CHEBI:57766"/>
        <dbReference type="ChEBI" id="CHEBI:57980"/>
        <dbReference type="EC" id="2.6.1.9"/>
    </reaction>
</comment>
<comment type="cofactor">
    <cofactor evidence="1">
        <name>pyridoxal 5'-phosphate</name>
        <dbReference type="ChEBI" id="CHEBI:597326"/>
    </cofactor>
</comment>
<comment type="pathway">
    <text evidence="1">Amino-acid biosynthesis; L-histidine biosynthesis; L-histidine from 5-phospho-alpha-D-ribose 1-diphosphate: step 7/9.</text>
</comment>
<comment type="subunit">
    <text evidence="1">Homodimer.</text>
</comment>
<comment type="similarity">
    <text evidence="1">Belongs to the class-II pyridoxal-phosphate-dependent aminotransferase family. Histidinol-phosphate aminotransferase subfamily.</text>
</comment>
<proteinExistence type="inferred from homology"/>
<gene>
    <name evidence="1" type="primary">hisC</name>
    <name type="ordered locus">XCV1876</name>
</gene>
<name>HIS8_XANE5</name>
<evidence type="ECO:0000255" key="1">
    <source>
        <dbReference type="HAMAP-Rule" id="MF_01023"/>
    </source>
</evidence>
<organism>
    <name type="scientific">Xanthomonas euvesicatoria pv. vesicatoria (strain 85-10)</name>
    <name type="common">Xanthomonas campestris pv. vesicatoria</name>
    <dbReference type="NCBI Taxonomy" id="316273"/>
    <lineage>
        <taxon>Bacteria</taxon>
        <taxon>Pseudomonadati</taxon>
        <taxon>Pseudomonadota</taxon>
        <taxon>Gammaproteobacteria</taxon>
        <taxon>Lysobacterales</taxon>
        <taxon>Lysobacteraceae</taxon>
        <taxon>Xanthomonas</taxon>
    </lineage>
</organism>
<accession>Q3BUF6</accession>
<sequence>MSASSILDLVREDLRAFAGYSSARTSALQGDVWLNANESAWANPADPDASTRRYPDPQPKGLRSALAALYGCAPEQLLIGRGSDEAIDLLVRGLCVPGRDAVLVTPPVFGMYAVCARLQNAPLVDVPLVDGPDGFRADIPAIVARALASNAKLVFLCSPSNPAGSAIALDQIEQALQALQGKALVVVDEAYGEFSDVPSAVGLLGRYDNLAVLRTLSKAHALAAARIGTLIANAELIALLRRCQAPYPVPTPCAAMAEQALSAPALEVTRRRIAEVRSERERVHEALAQLAGVRQVYPSQGNFLLVRFDDAEAAFQALLDAGVVVRDQRAVPRLADALRITLGTHEQNQRVLSALQRTQEAVA</sequence>
<feature type="chain" id="PRO_0000153483" description="Histidinol-phosphate aminotransferase">
    <location>
        <begin position="1"/>
        <end position="363"/>
    </location>
</feature>
<feature type="modified residue" description="N6-(pyridoxal phosphate)lysine" evidence="1">
    <location>
        <position position="218"/>
    </location>
</feature>